<feature type="chain" id="PRO_0000088512" description="1-phosphatidylinositol 4,5-bisphosphate phosphodiesterase 1">
    <location>
        <begin position="1"/>
        <end position="1099"/>
    </location>
</feature>
<feature type="domain" description="PI-PLC X-box" evidence="3">
    <location>
        <begin position="566"/>
        <end position="726"/>
    </location>
</feature>
<feature type="domain" description="PI-PLC Y-box" evidence="4">
    <location>
        <begin position="794"/>
        <end position="912"/>
    </location>
</feature>
<feature type="domain" description="C2" evidence="2">
    <location>
        <begin position="917"/>
        <end position="1071"/>
    </location>
</feature>
<feature type="region of interest" description="Disordered" evidence="5">
    <location>
        <begin position="1"/>
        <end position="109"/>
    </location>
</feature>
<feature type="region of interest" description="Disordered" evidence="5">
    <location>
        <begin position="128"/>
        <end position="164"/>
    </location>
</feature>
<feature type="region of interest" description="Disordered" evidence="5">
    <location>
        <begin position="742"/>
        <end position="780"/>
    </location>
</feature>
<feature type="compositionally biased region" description="Basic and acidic residues" evidence="5">
    <location>
        <begin position="1"/>
        <end position="10"/>
    </location>
</feature>
<feature type="compositionally biased region" description="Low complexity" evidence="5">
    <location>
        <begin position="43"/>
        <end position="66"/>
    </location>
</feature>
<feature type="compositionally biased region" description="Low complexity" evidence="5">
    <location>
        <begin position="86"/>
        <end position="109"/>
    </location>
</feature>
<feature type="compositionally biased region" description="Polar residues" evidence="5">
    <location>
        <begin position="131"/>
        <end position="141"/>
    </location>
</feature>
<feature type="compositionally biased region" description="Low complexity" evidence="5">
    <location>
        <begin position="142"/>
        <end position="155"/>
    </location>
</feature>
<feature type="compositionally biased region" description="Low complexity" evidence="5">
    <location>
        <begin position="743"/>
        <end position="778"/>
    </location>
</feature>
<feature type="active site" evidence="3">
    <location>
        <position position="579"/>
    </location>
</feature>
<feature type="active site" evidence="3">
    <location>
        <position position="642"/>
    </location>
</feature>
<feature type="binding site" evidence="1">
    <location>
        <position position="724"/>
    </location>
    <ligand>
        <name>substrate</name>
    </ligand>
</feature>
<feature type="binding site" evidence="1">
    <location>
        <position position="726"/>
    </location>
    <ligand>
        <name>substrate</name>
    </ligand>
</feature>
<feature type="binding site" evidence="1">
    <location>
        <position position="823"/>
    </location>
    <ligand>
        <name>substrate</name>
    </ligand>
</feature>
<feature type="binding site" evidence="1">
    <location>
        <position position="852"/>
    </location>
    <ligand>
        <name>substrate</name>
    </ligand>
</feature>
<gene>
    <name type="primary">PLC1</name>
</gene>
<proteinExistence type="predicted"/>
<organism>
    <name type="scientific">Candida albicans</name>
    <name type="common">Yeast</name>
    <dbReference type="NCBI Taxonomy" id="5476"/>
    <lineage>
        <taxon>Eukaryota</taxon>
        <taxon>Fungi</taxon>
        <taxon>Dikarya</taxon>
        <taxon>Ascomycota</taxon>
        <taxon>Saccharomycotina</taxon>
        <taxon>Pichiomycetes</taxon>
        <taxon>Debaryomycetaceae</taxon>
        <taxon>Candida/Lodderomyces clade</taxon>
        <taxon>Candida</taxon>
    </lineage>
</organism>
<sequence>MLESLNRRNSIDSNQADNDNDNDNHSNDELSPSELYYSPSGSPPKSQLLLRKSSSPSSYSPIKSDLPNIYSHLRSNDSESPPQPSPKQQSSLSSSSSSSSSSNTKSSTTKNIFKKLLRINKSSDNIDESRSIVSNNGGSPMSDSTTVTSTLSTDTAPKRGKSIQRSQILHHTDSDSLYLENQIELRPEISKSIGNIKIPSIFTNDGMPLLKISHKSKKRILFWIDPSCFKFSWRMANSTTTTTSATTSATTSGLPQGITNTTALSNSAIISTPAIATSAIHRLSITNRTTHEFVLDDIKSIYIQNEGSGYREELNISQKLEKNWITIIYFNHKKNSLKSLHLITDNDHDFKKLISAIYNLKQLRSQLAKEFLIDLNELDENYVKMLLNKELLAGDNGNVDGNEVDIRKSHKHVREFLSFNDILKYSKRLNINVNTNHLQQIFDQVLLLSSATTEKPVSTPLFEKGLNFEQFKQFVSILKDRKDLQEIWDSLAQGKEVLQFDEIKNFIINIQKENFSDDDDNSTINLIFQKYCSNDNGWNKESLNEYLLSSYSTPYREITQTQTNYYDYPLNEYFISSSHNTYLTGRQVAGDSSVEGYIRTLQRGCRCVEIDIWNGDSNTTTTTVIGTKDDDDKNEYEPIVNHGRTFTKPISFANVIRAIKKFAFIVSPWPLILSLEIHCSPECQIKVVNILKDILGENMIIAPIDIDSVILPSPAELKHKFIIKVKKTTSFQNLIETENGSFTTSTTTTTTTTTTTTTATSLSEDNENNKSNSSSTSSFIIRRRKNKSPKIINELSNLGIYTQGIKFRNFSLPESKTFNHCFSLGEKSINRMIKDDDKKISLDKHNRRYLMRVYPSGTRLKSSNFNPLPYWSHGVQMVATNWQTYDLGQQLNEALFENKIFQGYVLKPSVLRKPTLKSSSSNVDTRTSLTTTNSKTIRFNFEIISGHQLPKFPKDDYKDQAINPYISFEIIGAQDVQWDNNDSSPIAPTTSSSPFIRTTKIIRENGFNPNFNTKFSGSIITTTNDLIFIKFVVYASTSLNYPDYGENFPIAILVTKLNYLKQGYRYIYLNDLLGEQLVYSSIFIKIEYDEDLLNEFINK</sequence>
<accession>O13433</accession>
<reference key="1">
    <citation type="journal article" date="1998" name="Microbiology">
        <title>Genetic characterization of a phospholipase C gene from Candida albicans: presence of homologous sequences in Candida species other than Candida albicans.</title>
        <authorList>
            <person name="Bennett D.E."/>
            <person name="McCreary C.E."/>
            <person name="Coleman D.C."/>
        </authorList>
    </citation>
    <scope>NUCLEOTIDE SEQUENCE [GENOMIC DNA]</scope>
    <source>
        <strain>132A</strain>
    </source>
</reference>
<dbReference type="EC" id="3.1.4.11"/>
<dbReference type="EMBL" id="Y13975">
    <property type="protein sequence ID" value="CAA74308.1"/>
    <property type="molecule type" value="Genomic_DNA"/>
</dbReference>
<dbReference type="PIR" id="T18257">
    <property type="entry name" value="T18257"/>
</dbReference>
<dbReference type="SMR" id="O13433"/>
<dbReference type="VEuPathDB" id="FungiDB:C7_03710C_A"/>
<dbReference type="VEuPathDB" id="FungiDB:CAWG_05702"/>
<dbReference type="GO" id="GO:0004435">
    <property type="term" value="F:phosphatidylinositol-4,5-bisphosphate phospholipase C activity"/>
    <property type="evidence" value="ECO:0007669"/>
    <property type="project" value="UniProtKB-EC"/>
</dbReference>
<dbReference type="GO" id="GO:0016042">
    <property type="term" value="P:lipid catabolic process"/>
    <property type="evidence" value="ECO:0007669"/>
    <property type="project" value="UniProtKB-KW"/>
</dbReference>
<dbReference type="GO" id="GO:0048015">
    <property type="term" value="P:phosphatidylinositol-mediated signaling"/>
    <property type="evidence" value="ECO:0007669"/>
    <property type="project" value="TreeGrafter"/>
</dbReference>
<dbReference type="GO" id="GO:0051209">
    <property type="term" value="P:release of sequestered calcium ion into cytosol"/>
    <property type="evidence" value="ECO:0007669"/>
    <property type="project" value="TreeGrafter"/>
</dbReference>
<dbReference type="CDD" id="cd00275">
    <property type="entry name" value="C2_PLC_like"/>
    <property type="match status" value="1"/>
</dbReference>
<dbReference type="CDD" id="cd13360">
    <property type="entry name" value="PH_PLC_fungal"/>
    <property type="match status" value="1"/>
</dbReference>
<dbReference type="CDD" id="cd08598">
    <property type="entry name" value="PI-PLC1c_yeast"/>
    <property type="match status" value="1"/>
</dbReference>
<dbReference type="FunFam" id="3.20.20.190:FF:000039">
    <property type="entry name" value="Phosphoinositide phospholipase C"/>
    <property type="match status" value="1"/>
</dbReference>
<dbReference type="Gene3D" id="2.60.40.150">
    <property type="entry name" value="C2 domain"/>
    <property type="match status" value="1"/>
</dbReference>
<dbReference type="Gene3D" id="3.20.20.190">
    <property type="entry name" value="Phosphatidylinositol (PI) phosphodiesterase"/>
    <property type="match status" value="1"/>
</dbReference>
<dbReference type="InterPro" id="IPR000008">
    <property type="entry name" value="C2_dom"/>
</dbReference>
<dbReference type="InterPro" id="IPR035892">
    <property type="entry name" value="C2_domain_sf"/>
</dbReference>
<dbReference type="InterPro" id="IPR011992">
    <property type="entry name" value="EF-hand-dom_pair"/>
</dbReference>
<dbReference type="InterPro" id="IPR001192">
    <property type="entry name" value="PI-PLC_fam"/>
</dbReference>
<dbReference type="InterPro" id="IPR017946">
    <property type="entry name" value="PLC-like_Pdiesterase_TIM-brl"/>
</dbReference>
<dbReference type="InterPro" id="IPR037755">
    <property type="entry name" value="Plc1_PH"/>
</dbReference>
<dbReference type="InterPro" id="IPR000909">
    <property type="entry name" value="PLipase_C_PInositol-sp_X_dom"/>
</dbReference>
<dbReference type="InterPro" id="IPR001711">
    <property type="entry name" value="PLipase_C_Pinositol-sp_Y"/>
</dbReference>
<dbReference type="PANTHER" id="PTHR10336:SF36">
    <property type="entry name" value="1-PHOSPHATIDYLINOSITOL 4,5-BISPHOSPHATE PHOSPHODIESTERASE BETA-4"/>
    <property type="match status" value="1"/>
</dbReference>
<dbReference type="PANTHER" id="PTHR10336">
    <property type="entry name" value="PHOSPHOINOSITIDE-SPECIFIC PHOSPHOLIPASE C FAMILY PROTEIN"/>
    <property type="match status" value="1"/>
</dbReference>
<dbReference type="Pfam" id="PF00388">
    <property type="entry name" value="PI-PLC-X"/>
    <property type="match status" value="1"/>
</dbReference>
<dbReference type="Pfam" id="PF00387">
    <property type="entry name" value="PI-PLC-Y"/>
    <property type="match status" value="1"/>
</dbReference>
<dbReference type="PRINTS" id="PR00390">
    <property type="entry name" value="PHPHLIPASEC"/>
</dbReference>
<dbReference type="SMART" id="SM00239">
    <property type="entry name" value="C2"/>
    <property type="match status" value="1"/>
</dbReference>
<dbReference type="SMART" id="SM00148">
    <property type="entry name" value="PLCXc"/>
    <property type="match status" value="1"/>
</dbReference>
<dbReference type="SMART" id="SM00149">
    <property type="entry name" value="PLCYc"/>
    <property type="match status" value="1"/>
</dbReference>
<dbReference type="SUPFAM" id="SSF49562">
    <property type="entry name" value="C2 domain (Calcium/lipid-binding domain, CaLB)"/>
    <property type="match status" value="1"/>
</dbReference>
<dbReference type="SUPFAM" id="SSF47473">
    <property type="entry name" value="EF-hand"/>
    <property type="match status" value="1"/>
</dbReference>
<dbReference type="SUPFAM" id="SSF51695">
    <property type="entry name" value="PLC-like phosphodiesterases"/>
    <property type="match status" value="1"/>
</dbReference>
<dbReference type="PROSITE" id="PS50004">
    <property type="entry name" value="C2"/>
    <property type="match status" value="1"/>
</dbReference>
<dbReference type="PROSITE" id="PS50007">
    <property type="entry name" value="PIPLC_X_DOMAIN"/>
    <property type="match status" value="1"/>
</dbReference>
<dbReference type="PROSITE" id="PS50008">
    <property type="entry name" value="PIPLC_Y_DOMAIN"/>
    <property type="match status" value="1"/>
</dbReference>
<name>PLC1_CANAX</name>
<keyword id="KW-0378">Hydrolase</keyword>
<keyword id="KW-0442">Lipid degradation</keyword>
<keyword id="KW-0443">Lipid metabolism</keyword>
<keyword id="KW-0807">Transducer</keyword>
<protein>
    <recommendedName>
        <fullName>1-phosphatidylinositol 4,5-bisphosphate phosphodiesterase 1</fullName>
        <ecNumber>3.1.4.11</ecNumber>
    </recommendedName>
    <alternativeName>
        <fullName>Phosphoinositide phospholipase C</fullName>
    </alternativeName>
    <alternativeName>
        <fullName>Phospholipase C-1</fullName>
        <shortName>PLC-1</shortName>
    </alternativeName>
</protein>
<evidence type="ECO:0000250" key="1"/>
<evidence type="ECO:0000255" key="2">
    <source>
        <dbReference type="PROSITE-ProRule" id="PRU00041"/>
    </source>
</evidence>
<evidence type="ECO:0000255" key="3">
    <source>
        <dbReference type="PROSITE-ProRule" id="PRU00270"/>
    </source>
</evidence>
<evidence type="ECO:0000255" key="4">
    <source>
        <dbReference type="PROSITE-ProRule" id="PRU00271"/>
    </source>
</evidence>
<evidence type="ECO:0000256" key="5">
    <source>
        <dbReference type="SAM" id="MobiDB-lite"/>
    </source>
</evidence>
<comment type="function">
    <text>The production of the second messenger molecules diacylglycerol (DAG) and inositol 1,4,5-trisphosphate (IP3) is mediated by activated phosphatidylinositol-specific phospholipase C enzymes.</text>
</comment>
<comment type="catalytic activity">
    <reaction>
        <text>a 1,2-diacyl-sn-glycero-3-phospho-(1D-myo-inositol-4,5-bisphosphate) + H2O = 1D-myo-inositol 1,4,5-trisphosphate + a 1,2-diacyl-sn-glycerol + H(+)</text>
        <dbReference type="Rhea" id="RHEA:33179"/>
        <dbReference type="ChEBI" id="CHEBI:15377"/>
        <dbReference type="ChEBI" id="CHEBI:15378"/>
        <dbReference type="ChEBI" id="CHEBI:17815"/>
        <dbReference type="ChEBI" id="CHEBI:58456"/>
        <dbReference type="ChEBI" id="CHEBI:203600"/>
        <dbReference type="EC" id="3.1.4.11"/>
    </reaction>
</comment>